<protein>
    <recommendedName>
        <fullName evidence="1">Recombination protein RecR</fullName>
    </recommendedName>
</protein>
<organism>
    <name type="scientific">Syntrophomonas wolfei subsp. wolfei (strain DSM 2245B / Goettingen)</name>
    <dbReference type="NCBI Taxonomy" id="335541"/>
    <lineage>
        <taxon>Bacteria</taxon>
        <taxon>Bacillati</taxon>
        <taxon>Bacillota</taxon>
        <taxon>Clostridia</taxon>
        <taxon>Eubacteriales</taxon>
        <taxon>Syntrophomonadaceae</taxon>
        <taxon>Syntrophomonas</taxon>
    </lineage>
</organism>
<keyword id="KW-0227">DNA damage</keyword>
<keyword id="KW-0233">DNA recombination</keyword>
<keyword id="KW-0234">DNA repair</keyword>
<keyword id="KW-0479">Metal-binding</keyword>
<keyword id="KW-1185">Reference proteome</keyword>
<keyword id="KW-0862">Zinc</keyword>
<keyword id="KW-0863">Zinc-finger</keyword>
<name>RECR_SYNWW</name>
<evidence type="ECO:0000255" key="1">
    <source>
        <dbReference type="HAMAP-Rule" id="MF_00017"/>
    </source>
</evidence>
<gene>
    <name evidence="1" type="primary">recR</name>
    <name type="ordered locus">Swol_0032</name>
</gene>
<sequence>MRLARPLENLIDQLLKLPGIGPKTAQRLALYILKLPEMEARQLAQAIVDCRQKVFPCSRCGYLTDFDPCLICSDESRDKSLICIGEESSDVIAIERTGFRGQYFVLNKDFNLMEDKGLEDLNLKPLEDRLATGEIKEVVLALNPDMDGEVMSRFLATVAGSFGVKVTRLAHGLPVGGDIEFADEITLRRALEGRKEL</sequence>
<dbReference type="EMBL" id="CP000448">
    <property type="protein sequence ID" value="ABI67391.1"/>
    <property type="molecule type" value="Genomic_DNA"/>
</dbReference>
<dbReference type="RefSeq" id="WP_011639502.1">
    <property type="nucleotide sequence ID" value="NC_008346.1"/>
</dbReference>
<dbReference type="SMR" id="Q0B0W3"/>
<dbReference type="STRING" id="335541.Swol_0032"/>
<dbReference type="KEGG" id="swo:Swol_0032"/>
<dbReference type="eggNOG" id="COG0353">
    <property type="taxonomic scope" value="Bacteria"/>
</dbReference>
<dbReference type="HOGENOM" id="CLU_060739_1_2_9"/>
<dbReference type="OrthoDB" id="9802672at2"/>
<dbReference type="Proteomes" id="UP000001968">
    <property type="component" value="Chromosome"/>
</dbReference>
<dbReference type="GO" id="GO:0003677">
    <property type="term" value="F:DNA binding"/>
    <property type="evidence" value="ECO:0007669"/>
    <property type="project" value="UniProtKB-UniRule"/>
</dbReference>
<dbReference type="GO" id="GO:0008270">
    <property type="term" value="F:zinc ion binding"/>
    <property type="evidence" value="ECO:0007669"/>
    <property type="project" value="UniProtKB-KW"/>
</dbReference>
<dbReference type="GO" id="GO:0006310">
    <property type="term" value="P:DNA recombination"/>
    <property type="evidence" value="ECO:0007669"/>
    <property type="project" value="UniProtKB-UniRule"/>
</dbReference>
<dbReference type="GO" id="GO:0006281">
    <property type="term" value="P:DNA repair"/>
    <property type="evidence" value="ECO:0007669"/>
    <property type="project" value="UniProtKB-UniRule"/>
</dbReference>
<dbReference type="CDD" id="cd01025">
    <property type="entry name" value="TOPRIM_recR"/>
    <property type="match status" value="1"/>
</dbReference>
<dbReference type="Gene3D" id="3.30.60.80">
    <property type="match status" value="1"/>
</dbReference>
<dbReference type="Gene3D" id="3.40.1360.10">
    <property type="match status" value="1"/>
</dbReference>
<dbReference type="Gene3D" id="6.10.250.240">
    <property type="match status" value="1"/>
</dbReference>
<dbReference type="Gene3D" id="1.10.8.420">
    <property type="entry name" value="RecR Domain 1"/>
    <property type="match status" value="1"/>
</dbReference>
<dbReference type="HAMAP" id="MF_00017">
    <property type="entry name" value="RecR"/>
    <property type="match status" value="1"/>
</dbReference>
<dbReference type="InterPro" id="IPR000093">
    <property type="entry name" value="DNA_Rcmb_RecR"/>
</dbReference>
<dbReference type="InterPro" id="IPR003583">
    <property type="entry name" value="Hlx-hairpin-Hlx_DNA-bd_motif"/>
</dbReference>
<dbReference type="InterPro" id="IPR023627">
    <property type="entry name" value="Rcmb_RecR"/>
</dbReference>
<dbReference type="InterPro" id="IPR015967">
    <property type="entry name" value="Rcmb_RecR_Znf"/>
</dbReference>
<dbReference type="InterPro" id="IPR006171">
    <property type="entry name" value="TOPRIM_dom"/>
</dbReference>
<dbReference type="InterPro" id="IPR034137">
    <property type="entry name" value="TOPRIM_RecR"/>
</dbReference>
<dbReference type="NCBIfam" id="TIGR00615">
    <property type="entry name" value="recR"/>
    <property type="match status" value="1"/>
</dbReference>
<dbReference type="PANTHER" id="PTHR30446">
    <property type="entry name" value="RECOMBINATION PROTEIN RECR"/>
    <property type="match status" value="1"/>
</dbReference>
<dbReference type="PANTHER" id="PTHR30446:SF0">
    <property type="entry name" value="RECOMBINATION PROTEIN RECR"/>
    <property type="match status" value="1"/>
</dbReference>
<dbReference type="Pfam" id="PF21175">
    <property type="entry name" value="RecR_C"/>
    <property type="match status" value="1"/>
</dbReference>
<dbReference type="Pfam" id="PF21176">
    <property type="entry name" value="RecR_HhH"/>
    <property type="match status" value="1"/>
</dbReference>
<dbReference type="Pfam" id="PF02132">
    <property type="entry name" value="RecR_ZnF"/>
    <property type="match status" value="1"/>
</dbReference>
<dbReference type="Pfam" id="PF13662">
    <property type="entry name" value="Toprim_4"/>
    <property type="match status" value="1"/>
</dbReference>
<dbReference type="SMART" id="SM00278">
    <property type="entry name" value="HhH1"/>
    <property type="match status" value="1"/>
</dbReference>
<dbReference type="SUPFAM" id="SSF111304">
    <property type="entry name" value="Recombination protein RecR"/>
    <property type="match status" value="1"/>
</dbReference>
<dbReference type="PROSITE" id="PS01300">
    <property type="entry name" value="RECR"/>
    <property type="match status" value="1"/>
</dbReference>
<dbReference type="PROSITE" id="PS50880">
    <property type="entry name" value="TOPRIM"/>
    <property type="match status" value="1"/>
</dbReference>
<comment type="function">
    <text evidence="1">May play a role in DNA repair. It seems to be involved in an RecBC-independent recombinational process of DNA repair. It may act with RecF and RecO.</text>
</comment>
<comment type="similarity">
    <text evidence="1">Belongs to the RecR family.</text>
</comment>
<reference key="1">
    <citation type="journal article" date="2010" name="Environ. Microbiol.">
        <title>The genome of Syntrophomonas wolfei: new insights into syntrophic metabolism and biohydrogen production.</title>
        <authorList>
            <person name="Sieber J.R."/>
            <person name="Sims D.R."/>
            <person name="Han C."/>
            <person name="Kim E."/>
            <person name="Lykidis A."/>
            <person name="Lapidus A.L."/>
            <person name="McDonnald E."/>
            <person name="Rohlin L."/>
            <person name="Culley D.E."/>
            <person name="Gunsalus R."/>
            <person name="McInerney M.J."/>
        </authorList>
    </citation>
    <scope>NUCLEOTIDE SEQUENCE [LARGE SCALE GENOMIC DNA]</scope>
    <source>
        <strain>DSM 2245B / Goettingen</strain>
    </source>
</reference>
<proteinExistence type="inferred from homology"/>
<accession>Q0B0W3</accession>
<feature type="chain" id="PRO_0000322966" description="Recombination protein RecR">
    <location>
        <begin position="1"/>
        <end position="197"/>
    </location>
</feature>
<feature type="domain" description="Toprim" evidence="1">
    <location>
        <begin position="80"/>
        <end position="174"/>
    </location>
</feature>
<feature type="zinc finger region" description="C4-type" evidence="1">
    <location>
        <begin position="57"/>
        <end position="72"/>
    </location>
</feature>